<keyword id="KW-0002">3D-structure</keyword>
<keyword id="KW-0025">Alternative splicing</keyword>
<keyword id="KW-0963">Cytoplasm</keyword>
<keyword id="KW-1017">Isopeptide bond</keyword>
<keyword id="KW-0539">Nucleus</keyword>
<keyword id="KW-1185">Reference proteome</keyword>
<keyword id="KW-0833">Ubl conjugation pathway</keyword>
<proteinExistence type="evidence at protein level"/>
<protein>
    <recommendedName>
        <fullName evidence="7">Small ubiquitin-related modifier 2</fullName>
        <shortName evidence="7">AtSUMO2</shortName>
    </recommendedName>
</protein>
<feature type="chain" id="PRO_0000397033" description="Small ubiquitin-related modifier 2">
    <location>
        <begin position="1"/>
        <end position="103"/>
    </location>
</feature>
<feature type="domain" description="Ubiquitin-like" evidence="3">
    <location>
        <begin position="15"/>
        <end position="92"/>
    </location>
</feature>
<feature type="cross-link" description="Glycyl lysine isopeptide (Gly-Lys) (interchain with K-? in acceptor proteins)" evidence="3">
    <location>
        <position position="92"/>
    </location>
</feature>
<feature type="strand" evidence="11">
    <location>
        <begin position="16"/>
        <end position="23"/>
    </location>
</feature>
<feature type="strand" evidence="11">
    <location>
        <begin position="28"/>
        <end position="34"/>
    </location>
</feature>
<feature type="helix" evidence="11">
    <location>
        <begin position="40"/>
        <end position="50"/>
    </location>
</feature>
<feature type="helix" evidence="11">
    <location>
        <begin position="54"/>
        <end position="56"/>
    </location>
</feature>
<feature type="strand" evidence="11">
    <location>
        <begin position="57"/>
        <end position="61"/>
    </location>
</feature>
<feature type="helix" evidence="11">
    <location>
        <begin position="72"/>
        <end position="75"/>
    </location>
</feature>
<feature type="strand" evidence="11">
    <location>
        <begin position="82"/>
        <end position="87"/>
    </location>
</feature>
<evidence type="ECO:0000250" key="1"/>
<evidence type="ECO:0000250" key="2">
    <source>
        <dbReference type="UniProtKB" id="P55852"/>
    </source>
</evidence>
<evidence type="ECO:0000255" key="3">
    <source>
        <dbReference type="PROSITE-ProRule" id="PRU00214"/>
    </source>
</evidence>
<evidence type="ECO:0000269" key="4">
    <source>
    </source>
</evidence>
<evidence type="ECO:0000269" key="5">
    <source>
    </source>
</evidence>
<evidence type="ECO:0000269" key="6">
    <source>
    </source>
</evidence>
<evidence type="ECO:0000303" key="7">
    <source>
    </source>
</evidence>
<evidence type="ECO:0000305" key="8"/>
<evidence type="ECO:0000312" key="9">
    <source>
        <dbReference type="Araport" id="AT5G55160"/>
    </source>
</evidence>
<evidence type="ECO:0000312" key="10">
    <source>
        <dbReference type="EMBL" id="BAB08585.1"/>
    </source>
</evidence>
<evidence type="ECO:0007829" key="11">
    <source>
        <dbReference type="PDB" id="8OI3"/>
    </source>
</evidence>
<accession>Q9FLP6</accession>
<accession>Q67ZL9</accession>
<reference key="1">
    <citation type="journal article" date="2003" name="J. Biol. Chem.">
        <title>The small ubiquitin-like modifier (SUMO) protein modification system in Arabidopsis. Accumulation of SUMO1 and -2 conjugates is increased by stress.</title>
        <authorList>
            <person name="Kurepa J."/>
            <person name="Walker J.M."/>
            <person name="Smalle J."/>
            <person name="Gosink M.M."/>
            <person name="Davis S.J."/>
            <person name="Durham T.L."/>
            <person name="Sung D.Y."/>
            <person name="Vierstra R.D."/>
        </authorList>
    </citation>
    <scope>NUCLEOTIDE SEQUENCE [MRNA]</scope>
    <scope>SUBCELLULAR LOCATION</scope>
    <source>
        <strain>cv. Columbia</strain>
    </source>
</reference>
<reference key="2">
    <citation type="journal article" date="1998" name="DNA Res.">
        <title>Structural analysis of Arabidopsis thaliana chromosome 5. IV. Sequence features of the regions of 1,456,315 bp covered by nineteen physically assigned P1 and TAC clones.</title>
        <authorList>
            <person name="Sato S."/>
            <person name="Kaneko T."/>
            <person name="Kotani H."/>
            <person name="Nakamura Y."/>
            <person name="Asamizu E."/>
            <person name="Miyajima N."/>
            <person name="Tabata S."/>
        </authorList>
    </citation>
    <scope>NUCLEOTIDE SEQUENCE [LARGE SCALE GENOMIC DNA]</scope>
    <source>
        <strain>cv. Columbia</strain>
    </source>
</reference>
<reference key="3">
    <citation type="journal article" date="2017" name="Plant J.">
        <title>Araport11: a complete reannotation of the Arabidopsis thaliana reference genome.</title>
        <authorList>
            <person name="Cheng C.Y."/>
            <person name="Krishnakumar V."/>
            <person name="Chan A.P."/>
            <person name="Thibaud-Nissen F."/>
            <person name="Schobel S."/>
            <person name="Town C.D."/>
        </authorList>
    </citation>
    <scope>GENOME REANNOTATION</scope>
    <source>
        <strain>cv. Columbia</strain>
    </source>
</reference>
<reference key="4">
    <citation type="journal article" date="2003" name="Science">
        <title>Empirical analysis of transcriptional activity in the Arabidopsis genome.</title>
        <authorList>
            <person name="Yamada K."/>
            <person name="Lim J."/>
            <person name="Dale J.M."/>
            <person name="Chen H."/>
            <person name="Shinn P."/>
            <person name="Palm C.J."/>
            <person name="Southwick A.M."/>
            <person name="Wu H.C."/>
            <person name="Kim C.J."/>
            <person name="Nguyen M."/>
            <person name="Pham P.K."/>
            <person name="Cheuk R.F."/>
            <person name="Karlin-Newmann G."/>
            <person name="Liu S.X."/>
            <person name="Lam B."/>
            <person name="Sakano H."/>
            <person name="Wu T."/>
            <person name="Yu G."/>
            <person name="Miranda M."/>
            <person name="Quach H.L."/>
            <person name="Tripp M."/>
            <person name="Chang C.H."/>
            <person name="Lee J.M."/>
            <person name="Toriumi M.J."/>
            <person name="Chan M.M."/>
            <person name="Tang C.C."/>
            <person name="Onodera C.S."/>
            <person name="Deng J.M."/>
            <person name="Akiyama K."/>
            <person name="Ansari Y."/>
            <person name="Arakawa T."/>
            <person name="Banh J."/>
            <person name="Banno F."/>
            <person name="Bowser L."/>
            <person name="Brooks S.Y."/>
            <person name="Carninci P."/>
            <person name="Chao Q."/>
            <person name="Choy N."/>
            <person name="Enju A."/>
            <person name="Goldsmith A.D."/>
            <person name="Gurjal M."/>
            <person name="Hansen N.F."/>
            <person name="Hayashizaki Y."/>
            <person name="Johnson-Hopson C."/>
            <person name="Hsuan V.W."/>
            <person name="Iida K."/>
            <person name="Karnes M."/>
            <person name="Khan S."/>
            <person name="Koesema E."/>
            <person name="Ishida J."/>
            <person name="Jiang P.X."/>
            <person name="Jones T."/>
            <person name="Kawai J."/>
            <person name="Kamiya A."/>
            <person name="Meyers C."/>
            <person name="Nakajima M."/>
            <person name="Narusaka M."/>
            <person name="Seki M."/>
            <person name="Sakurai T."/>
            <person name="Satou M."/>
            <person name="Tamse R."/>
            <person name="Vaysberg M."/>
            <person name="Wallender E.K."/>
            <person name="Wong C."/>
            <person name="Yamamura Y."/>
            <person name="Yuan S."/>
            <person name="Shinozaki K."/>
            <person name="Davis R.W."/>
            <person name="Theologis A."/>
            <person name="Ecker J.R."/>
        </authorList>
    </citation>
    <scope>NUCLEOTIDE SEQUENCE [LARGE SCALE MRNA]</scope>
    <source>
        <strain>cv. Columbia</strain>
    </source>
</reference>
<reference key="5">
    <citation type="submission" date="2002-03" db="EMBL/GenBank/DDBJ databases">
        <title>Full-length cDNA from Arabidopsis thaliana.</title>
        <authorList>
            <person name="Brover V.V."/>
            <person name="Troukhan M.E."/>
            <person name="Alexandrov N.A."/>
            <person name="Lu Y.-P."/>
            <person name="Flavell R.B."/>
            <person name="Feldmann K.A."/>
        </authorList>
    </citation>
    <scope>NUCLEOTIDE SEQUENCE [LARGE SCALE MRNA]</scope>
</reference>
<reference key="6">
    <citation type="submission" date="2004-09" db="EMBL/GenBank/DDBJ databases">
        <title>Large-scale analysis of RIKEN Arabidopsis full-length (RAFL) cDNAs.</title>
        <authorList>
            <person name="Totoki Y."/>
            <person name="Seki M."/>
            <person name="Ishida J."/>
            <person name="Nakajima M."/>
            <person name="Enju A."/>
            <person name="Kamiya A."/>
            <person name="Narusaka M."/>
            <person name="Shin-i T."/>
            <person name="Nakagawa M."/>
            <person name="Sakamoto N."/>
            <person name="Oishi K."/>
            <person name="Kohara Y."/>
            <person name="Kobayashi M."/>
            <person name="Toyoda A."/>
            <person name="Sakaki Y."/>
            <person name="Sakurai T."/>
            <person name="Iida K."/>
            <person name="Akiyama K."/>
            <person name="Satou M."/>
            <person name="Toyoda T."/>
            <person name="Konagaya A."/>
            <person name="Carninci P."/>
            <person name="Kawai J."/>
            <person name="Hayashizaki Y."/>
            <person name="Shinozaki K."/>
        </authorList>
    </citation>
    <scope>NUCLEOTIDE SEQUENCE [LARGE SCALE MRNA] OF 68-103</scope>
    <source>
        <strain>cv. Columbia</strain>
    </source>
</reference>
<reference key="7">
    <citation type="journal article" date="2006" name="Plant Physiol.">
        <title>SIZ1 small ubiquitin-like modifier E3 ligase facilitates basal thermotolerance in Arabidopsis independent of salicylic acid.</title>
        <authorList>
            <person name="Yoo C.Y."/>
            <person name="Miura K."/>
            <person name="Jin J.B."/>
            <person name="Lee J."/>
            <person name="Park H.C."/>
            <person name="Salt D.E."/>
            <person name="Yun D.J."/>
            <person name="Bressan R.A."/>
            <person name="Hasegawa P.M."/>
        </authorList>
    </citation>
    <scope>FUNCTION</scope>
</reference>
<reference key="8">
    <citation type="journal article" date="2007" name="Plant Physiol.">
        <title>Genetic analysis of SUMOylation in Arabidopsis: conjugation of SUMO1 and SUMO2 to nuclear proteins is essential.</title>
        <authorList>
            <person name="Saracco S.A."/>
            <person name="Miller M.J."/>
            <person name="Kurepa J."/>
            <person name="Vierstra R.D."/>
        </authorList>
    </citation>
    <scope>FUNCTION</scope>
    <scope>DISRUPTION PHENOTYPE</scope>
</reference>
<name>SUMO2_ARATH</name>
<gene>
    <name evidence="7" type="primary">SUMO2</name>
    <name type="synonym">SUM2</name>
    <name evidence="9" type="ordered locus">At5g55160</name>
    <name evidence="10" type="ORF">MCO15.11</name>
</gene>
<sequence length="103" mass="11654">MSATPEEDKKPDQGAHINLKVKGQDGNEVFFRIKRSTQLKKLMNAYCDRQSVDFNSIAFLFDGRRLRAEQTPDELEMEDGDEIDAMLHQTGGGAKNGLKLFCF</sequence>
<organism>
    <name type="scientific">Arabidopsis thaliana</name>
    <name type="common">Mouse-ear cress</name>
    <dbReference type="NCBI Taxonomy" id="3702"/>
    <lineage>
        <taxon>Eukaryota</taxon>
        <taxon>Viridiplantae</taxon>
        <taxon>Streptophyta</taxon>
        <taxon>Embryophyta</taxon>
        <taxon>Tracheophyta</taxon>
        <taxon>Spermatophyta</taxon>
        <taxon>Magnoliopsida</taxon>
        <taxon>eudicotyledons</taxon>
        <taxon>Gunneridae</taxon>
        <taxon>Pentapetalae</taxon>
        <taxon>rosids</taxon>
        <taxon>malvids</taxon>
        <taxon>Brassicales</taxon>
        <taxon>Brassicaceae</taxon>
        <taxon>Camelineae</taxon>
        <taxon>Arabidopsis</taxon>
    </lineage>
</organism>
<dbReference type="EMBL" id="AF510520">
    <property type="protein sequence ID" value="AAN03846.1"/>
    <property type="molecule type" value="mRNA"/>
</dbReference>
<dbReference type="EMBL" id="AB010071">
    <property type="protein sequence ID" value="BAB08585.1"/>
    <property type="molecule type" value="Genomic_DNA"/>
</dbReference>
<dbReference type="EMBL" id="CP002688">
    <property type="protein sequence ID" value="AED96593.1"/>
    <property type="molecule type" value="Genomic_DNA"/>
</dbReference>
<dbReference type="EMBL" id="AY075614">
    <property type="protein sequence ID" value="AAL91628.1"/>
    <property type="molecule type" value="mRNA"/>
</dbReference>
<dbReference type="EMBL" id="AY113019">
    <property type="protein sequence ID" value="AAM47327.1"/>
    <property type="molecule type" value="mRNA"/>
</dbReference>
<dbReference type="EMBL" id="AY085191">
    <property type="protein sequence ID" value="AAM61742.1"/>
    <property type="molecule type" value="mRNA"/>
</dbReference>
<dbReference type="EMBL" id="AK176098">
    <property type="protein sequence ID" value="BAD43861.1"/>
    <property type="molecule type" value="mRNA"/>
</dbReference>
<dbReference type="RefSeq" id="NP_200327.1">
    <molecule id="Q9FLP6-1"/>
    <property type="nucleotide sequence ID" value="NM_124898.4"/>
</dbReference>
<dbReference type="PDB" id="8OI3">
    <property type="method" value="X-ray"/>
    <property type="resolution" value="1.50 A"/>
    <property type="chains" value="C/D=1-91"/>
</dbReference>
<dbReference type="PDBsum" id="8OI3"/>
<dbReference type="SMR" id="Q9FLP6"/>
<dbReference type="BioGRID" id="20853">
    <property type="interactions" value="16"/>
</dbReference>
<dbReference type="FunCoup" id="Q9FLP6">
    <property type="interactions" value="4245"/>
</dbReference>
<dbReference type="STRING" id="3702.Q9FLP6"/>
<dbReference type="GlyGen" id="Q9FLP6">
    <property type="glycosylation" value="1 site, 1 O-linked glycan (1 site)"/>
</dbReference>
<dbReference type="ProteomicsDB" id="228288">
    <molecule id="Q9FLP6-1"/>
</dbReference>
<dbReference type="EnsemblPlants" id="AT5G55160.1">
    <molecule id="Q9FLP6-1"/>
    <property type="protein sequence ID" value="AT5G55160.1"/>
    <property type="gene ID" value="AT5G55160"/>
</dbReference>
<dbReference type="GeneID" id="835609"/>
<dbReference type="Gramene" id="AT5G55160.1">
    <molecule id="Q9FLP6-1"/>
    <property type="protein sequence ID" value="AT5G55160.1"/>
    <property type="gene ID" value="AT5G55160"/>
</dbReference>
<dbReference type="KEGG" id="ath:AT5G55160"/>
<dbReference type="Araport" id="AT5G55160"/>
<dbReference type="TAIR" id="AT5G55160">
    <property type="gene designation" value="SUMO2"/>
</dbReference>
<dbReference type="HOGENOM" id="CLU_148322_4_0_1"/>
<dbReference type="InParanoid" id="Q9FLP6"/>
<dbReference type="OMA" id="MKIYCAR"/>
<dbReference type="OrthoDB" id="442921at2759"/>
<dbReference type="PhylomeDB" id="Q9FLP6"/>
<dbReference type="PRO" id="PR:Q9FLP6"/>
<dbReference type="Proteomes" id="UP000006548">
    <property type="component" value="Chromosome 5"/>
</dbReference>
<dbReference type="ExpressionAtlas" id="Q9FLP6">
    <property type="expression patterns" value="baseline and differential"/>
</dbReference>
<dbReference type="GO" id="GO:0005737">
    <property type="term" value="C:cytoplasm"/>
    <property type="evidence" value="ECO:0007669"/>
    <property type="project" value="UniProtKB-SubCell"/>
</dbReference>
<dbReference type="GO" id="GO:0005634">
    <property type="term" value="C:nucleus"/>
    <property type="evidence" value="ECO:0007669"/>
    <property type="project" value="UniProtKB-SubCell"/>
</dbReference>
<dbReference type="CDD" id="cd16116">
    <property type="entry name" value="Ubl_Smt3_like"/>
    <property type="match status" value="1"/>
</dbReference>
<dbReference type="FunFam" id="3.10.20.90:FF:000171">
    <property type="entry name" value="Small ubiquitin-related modifier"/>
    <property type="match status" value="1"/>
</dbReference>
<dbReference type="Gene3D" id="3.10.20.90">
    <property type="entry name" value="Phosphatidylinositol 3-kinase Catalytic Subunit, Chain A, domain 1"/>
    <property type="match status" value="1"/>
</dbReference>
<dbReference type="InterPro" id="IPR022617">
    <property type="entry name" value="Rad60/SUMO-like_dom"/>
</dbReference>
<dbReference type="InterPro" id="IPR000626">
    <property type="entry name" value="Ubiquitin-like_dom"/>
</dbReference>
<dbReference type="InterPro" id="IPR029071">
    <property type="entry name" value="Ubiquitin-like_domsf"/>
</dbReference>
<dbReference type="PANTHER" id="PTHR10562">
    <property type="entry name" value="SMALL UBIQUITIN-RELATED MODIFIER"/>
    <property type="match status" value="1"/>
</dbReference>
<dbReference type="Pfam" id="PF11976">
    <property type="entry name" value="Rad60-SLD"/>
    <property type="match status" value="1"/>
</dbReference>
<dbReference type="SMART" id="SM00213">
    <property type="entry name" value="UBQ"/>
    <property type="match status" value="1"/>
</dbReference>
<dbReference type="SUPFAM" id="SSF54236">
    <property type="entry name" value="Ubiquitin-like"/>
    <property type="match status" value="1"/>
</dbReference>
<dbReference type="PROSITE" id="PS50053">
    <property type="entry name" value="UBIQUITIN_2"/>
    <property type="match status" value="1"/>
</dbReference>
<comment type="function">
    <text evidence="5 6">Ubiquitin-like protein which can be covalently attached to target lysines as a monomer. Does not seem to be involved in protein degradation and may function as an antagonist of ubiquitin in the degradation process. Required for the massive protein sumoylation in the nucleus induced by heat shock and controlled by SIZ1.</text>
</comment>
<comment type="subunit">
    <text evidence="1 2">Interacts with SAE2, SCE1, SIZ1 and MMS21 (By similarity). Interacts with HSFA2 (By similarity). Covalently attached to ABI5, FLD, GTE3, HSFA2 and ICE1 (By similarity).</text>
</comment>
<comment type="subcellular location">
    <subcellularLocation>
        <location evidence="4">Nucleus</location>
    </subcellularLocation>
    <subcellularLocation>
        <location evidence="4">Cytoplasm</location>
    </subcellularLocation>
</comment>
<comment type="alternative products">
    <event type="alternative splicing"/>
    <isoform>
        <id>Q9FLP6-1</id>
        <name>1</name>
        <sequence type="displayed"/>
    </isoform>
    <text>A number of isoforms are produced. According to EST sequences.</text>
</comment>
<comment type="disruption phenotype">
    <text evidence="6">No visible phenotype.</text>
</comment>
<comment type="miscellaneous">
    <text>Stress conditions rapidly and substantially elevates the amount of SUMO1 and SUMO2 conjugates with a concomitant reduction in the amount of free SUMO proteins. The SUMO conjugation system plays an important function in stress protection and/or repair.</text>
</comment>
<comment type="similarity">
    <text evidence="8">Belongs to the ubiquitin family. SUMO subfamily.</text>
</comment>